<dbReference type="EC" id="2.3.2.23"/>
<dbReference type="EMBL" id="DQ027026">
    <property type="protein sequence ID" value="AAY44852.1"/>
    <property type="molecule type" value="mRNA"/>
</dbReference>
<dbReference type="EMBL" id="AC012562">
    <property type="protein sequence ID" value="AAG51365.1"/>
    <property type="molecule type" value="Genomic_DNA"/>
</dbReference>
<dbReference type="EMBL" id="CP002686">
    <property type="protein sequence ID" value="AEE74666.1"/>
    <property type="molecule type" value="Genomic_DNA"/>
</dbReference>
<dbReference type="EMBL" id="CP002686">
    <property type="protein sequence ID" value="ANM65238.1"/>
    <property type="molecule type" value="Genomic_DNA"/>
</dbReference>
<dbReference type="EMBL" id="BT024821">
    <property type="protein sequence ID" value="ABD60704.1"/>
    <property type="molecule type" value="mRNA"/>
</dbReference>
<dbReference type="RefSeq" id="NP_001319500.1">
    <property type="nucleotide sequence ID" value="NM_001337764.1"/>
</dbReference>
<dbReference type="RefSeq" id="NP_566332.1">
    <property type="nucleotide sequence ID" value="NM_111704.2"/>
</dbReference>
<dbReference type="SMR" id="Q9C9Y7"/>
<dbReference type="FunCoup" id="Q9C9Y7">
    <property type="interactions" value="52"/>
</dbReference>
<dbReference type="STRING" id="3702.Q9C9Y7"/>
<dbReference type="PaxDb" id="3702-AT3G08700.1"/>
<dbReference type="EnsemblPlants" id="AT3G08700.1">
    <property type="protein sequence ID" value="AT3G08700.1"/>
    <property type="gene ID" value="AT3G08700"/>
</dbReference>
<dbReference type="EnsemblPlants" id="AT3G08700.2">
    <property type="protein sequence ID" value="AT3G08700.2"/>
    <property type="gene ID" value="AT3G08700"/>
</dbReference>
<dbReference type="GeneID" id="820017"/>
<dbReference type="Gramene" id="AT3G08700.1">
    <property type="protein sequence ID" value="AT3G08700.1"/>
    <property type="gene ID" value="AT3G08700"/>
</dbReference>
<dbReference type="Gramene" id="AT3G08700.2">
    <property type="protein sequence ID" value="AT3G08700.2"/>
    <property type="gene ID" value="AT3G08700"/>
</dbReference>
<dbReference type="KEGG" id="ath:AT3G08700"/>
<dbReference type="Araport" id="AT3G08700"/>
<dbReference type="TAIR" id="AT3G08700">
    <property type="gene designation" value="UBC12"/>
</dbReference>
<dbReference type="eggNOG" id="KOG0417">
    <property type="taxonomic scope" value="Eukaryota"/>
</dbReference>
<dbReference type="HOGENOM" id="CLU_030988_13_3_1"/>
<dbReference type="InParanoid" id="Q9C9Y7"/>
<dbReference type="OMA" id="HSDLFNW"/>
<dbReference type="PhylomeDB" id="Q9C9Y7"/>
<dbReference type="UniPathway" id="UPA00143"/>
<dbReference type="PRO" id="PR:Q9C9Y7"/>
<dbReference type="Proteomes" id="UP000006548">
    <property type="component" value="Chromosome 3"/>
</dbReference>
<dbReference type="ExpressionAtlas" id="Q9C9Y7">
    <property type="expression patterns" value="baseline and differential"/>
</dbReference>
<dbReference type="GO" id="GO:0005524">
    <property type="term" value="F:ATP binding"/>
    <property type="evidence" value="ECO:0007669"/>
    <property type="project" value="UniProtKB-KW"/>
</dbReference>
<dbReference type="GO" id="GO:0061631">
    <property type="term" value="F:ubiquitin conjugating enzyme activity"/>
    <property type="evidence" value="ECO:0007669"/>
    <property type="project" value="UniProtKB-EC"/>
</dbReference>
<dbReference type="GO" id="GO:0016567">
    <property type="term" value="P:protein ubiquitination"/>
    <property type="evidence" value="ECO:0007669"/>
    <property type="project" value="UniProtKB-UniPathway"/>
</dbReference>
<dbReference type="CDD" id="cd23792">
    <property type="entry name" value="UBCc_UBE2D"/>
    <property type="match status" value="1"/>
</dbReference>
<dbReference type="FunFam" id="3.10.110.10:FF:000001">
    <property type="entry name" value="Ubiquitin-conjugating enzyme 28, E2"/>
    <property type="match status" value="1"/>
</dbReference>
<dbReference type="Gene3D" id="3.10.110.10">
    <property type="entry name" value="Ubiquitin Conjugating Enzyme"/>
    <property type="match status" value="1"/>
</dbReference>
<dbReference type="InterPro" id="IPR000608">
    <property type="entry name" value="UBQ-conjugat_E2_core"/>
</dbReference>
<dbReference type="InterPro" id="IPR023313">
    <property type="entry name" value="UBQ-conjugating_AS"/>
</dbReference>
<dbReference type="InterPro" id="IPR016135">
    <property type="entry name" value="UBQ-conjugating_enzyme/RWD"/>
</dbReference>
<dbReference type="PANTHER" id="PTHR24068">
    <property type="entry name" value="UBIQUITIN-CONJUGATING ENZYME E2"/>
    <property type="match status" value="1"/>
</dbReference>
<dbReference type="Pfam" id="PF00179">
    <property type="entry name" value="UQ_con"/>
    <property type="match status" value="1"/>
</dbReference>
<dbReference type="SMART" id="SM00212">
    <property type="entry name" value="UBCc"/>
    <property type="match status" value="1"/>
</dbReference>
<dbReference type="SUPFAM" id="SSF54495">
    <property type="entry name" value="UBC-like"/>
    <property type="match status" value="1"/>
</dbReference>
<dbReference type="PROSITE" id="PS00183">
    <property type="entry name" value="UBC_1"/>
    <property type="match status" value="1"/>
</dbReference>
<dbReference type="PROSITE" id="PS50127">
    <property type="entry name" value="UBC_2"/>
    <property type="match status" value="1"/>
</dbReference>
<proteinExistence type="evidence at transcript level"/>
<evidence type="ECO:0000250" key="1">
    <source>
        <dbReference type="UniProtKB" id="P42743"/>
    </source>
</evidence>
<evidence type="ECO:0000255" key="2">
    <source>
        <dbReference type="PROSITE-ProRule" id="PRU00388"/>
    </source>
</evidence>
<evidence type="ECO:0000255" key="3">
    <source>
        <dbReference type="PROSITE-ProRule" id="PRU10133"/>
    </source>
</evidence>
<evidence type="ECO:0000256" key="4">
    <source>
        <dbReference type="SAM" id="MobiDB-lite"/>
    </source>
</evidence>
<evidence type="ECO:0000269" key="5">
    <source>
    </source>
</evidence>
<keyword id="KW-0067">ATP-binding</keyword>
<keyword id="KW-0547">Nucleotide-binding</keyword>
<keyword id="KW-1185">Reference proteome</keyword>
<keyword id="KW-0808">Transferase</keyword>
<keyword id="KW-0833">Ubl conjugation pathway</keyword>
<protein>
    <recommendedName>
        <fullName>Probable ubiquitin-conjugating enzyme E2 12</fullName>
        <ecNumber>2.3.2.23</ecNumber>
    </recommendedName>
    <alternativeName>
        <fullName>E2 ubiquitin-conjugating enzyme 12</fullName>
    </alternativeName>
</protein>
<sequence length="149" mass="16710">MASKRISRELRDMQRHPPANCSAGPVAEEDIFHWQATIMGPHDSPYSGGVFTVSIDFSSDYPFKPPKVNFKTKVYHPNIDSKGSICLDILKEQWSPAPTTSKVLLSICSLLTDPNPNDPLVPEIAHLYKVDKSKYESTAQKWTQKYAMG</sequence>
<reference key="1">
    <citation type="journal article" date="2005" name="Plant Physiol.">
        <title>Genome analysis and functional characterization of the E2 and RING-type E3 ligase ubiquitination enzymes of Arabidopsis.</title>
        <authorList>
            <person name="Kraft E."/>
            <person name="Stone S.L."/>
            <person name="Ma L."/>
            <person name="Su N."/>
            <person name="Gao Y."/>
            <person name="Lau O.-S."/>
            <person name="Deng X.-W."/>
            <person name="Callis J."/>
        </authorList>
    </citation>
    <scope>NUCLEOTIDE SEQUENCE [MRNA]</scope>
    <scope>TISSUE SPECIFICITY</scope>
    <scope>GENE FAMILY</scope>
    <scope>NOMENCLATURE</scope>
</reference>
<reference key="2">
    <citation type="journal article" date="2000" name="Nature">
        <title>Sequence and analysis of chromosome 3 of the plant Arabidopsis thaliana.</title>
        <authorList>
            <person name="Salanoubat M."/>
            <person name="Lemcke K."/>
            <person name="Rieger M."/>
            <person name="Ansorge W."/>
            <person name="Unseld M."/>
            <person name="Fartmann B."/>
            <person name="Valle G."/>
            <person name="Bloecker H."/>
            <person name="Perez-Alonso M."/>
            <person name="Obermaier B."/>
            <person name="Delseny M."/>
            <person name="Boutry M."/>
            <person name="Grivell L.A."/>
            <person name="Mache R."/>
            <person name="Puigdomenech P."/>
            <person name="De Simone V."/>
            <person name="Choisne N."/>
            <person name="Artiguenave F."/>
            <person name="Robert C."/>
            <person name="Brottier P."/>
            <person name="Wincker P."/>
            <person name="Cattolico L."/>
            <person name="Weissenbach J."/>
            <person name="Saurin W."/>
            <person name="Quetier F."/>
            <person name="Schaefer M."/>
            <person name="Mueller-Auer S."/>
            <person name="Gabel C."/>
            <person name="Fuchs M."/>
            <person name="Benes V."/>
            <person name="Wurmbach E."/>
            <person name="Drzonek H."/>
            <person name="Erfle H."/>
            <person name="Jordan N."/>
            <person name="Bangert S."/>
            <person name="Wiedelmann R."/>
            <person name="Kranz H."/>
            <person name="Voss H."/>
            <person name="Holland R."/>
            <person name="Brandt P."/>
            <person name="Nyakatura G."/>
            <person name="Vezzi A."/>
            <person name="D'Angelo M."/>
            <person name="Pallavicini A."/>
            <person name="Toppo S."/>
            <person name="Simionati B."/>
            <person name="Conrad A."/>
            <person name="Hornischer K."/>
            <person name="Kauer G."/>
            <person name="Loehnert T.-H."/>
            <person name="Nordsiek G."/>
            <person name="Reichelt J."/>
            <person name="Scharfe M."/>
            <person name="Schoen O."/>
            <person name="Bargues M."/>
            <person name="Terol J."/>
            <person name="Climent J."/>
            <person name="Navarro P."/>
            <person name="Collado C."/>
            <person name="Perez-Perez A."/>
            <person name="Ottenwaelder B."/>
            <person name="Duchemin D."/>
            <person name="Cooke R."/>
            <person name="Laudie M."/>
            <person name="Berger-Llauro C."/>
            <person name="Purnelle B."/>
            <person name="Masuy D."/>
            <person name="de Haan M."/>
            <person name="Maarse A.C."/>
            <person name="Alcaraz J.-P."/>
            <person name="Cottet A."/>
            <person name="Casacuberta E."/>
            <person name="Monfort A."/>
            <person name="Argiriou A."/>
            <person name="Flores M."/>
            <person name="Liguori R."/>
            <person name="Vitale D."/>
            <person name="Mannhaupt G."/>
            <person name="Haase D."/>
            <person name="Schoof H."/>
            <person name="Rudd S."/>
            <person name="Zaccaria P."/>
            <person name="Mewes H.-W."/>
            <person name="Mayer K.F.X."/>
            <person name="Kaul S."/>
            <person name="Town C.D."/>
            <person name="Koo H.L."/>
            <person name="Tallon L.J."/>
            <person name="Jenkins J."/>
            <person name="Rooney T."/>
            <person name="Rizzo M."/>
            <person name="Walts A."/>
            <person name="Utterback T."/>
            <person name="Fujii C.Y."/>
            <person name="Shea T.P."/>
            <person name="Creasy T.H."/>
            <person name="Haas B."/>
            <person name="Maiti R."/>
            <person name="Wu D."/>
            <person name="Peterson J."/>
            <person name="Van Aken S."/>
            <person name="Pai G."/>
            <person name="Militscher J."/>
            <person name="Sellers P."/>
            <person name="Gill J.E."/>
            <person name="Feldblyum T.V."/>
            <person name="Preuss D."/>
            <person name="Lin X."/>
            <person name="Nierman W.C."/>
            <person name="Salzberg S.L."/>
            <person name="White O."/>
            <person name="Venter J.C."/>
            <person name="Fraser C.M."/>
            <person name="Kaneko T."/>
            <person name="Nakamura Y."/>
            <person name="Sato S."/>
            <person name="Kato T."/>
            <person name="Asamizu E."/>
            <person name="Sasamoto S."/>
            <person name="Kimura T."/>
            <person name="Idesawa K."/>
            <person name="Kawashima K."/>
            <person name="Kishida Y."/>
            <person name="Kiyokawa C."/>
            <person name="Kohara M."/>
            <person name="Matsumoto M."/>
            <person name="Matsuno A."/>
            <person name="Muraki A."/>
            <person name="Nakayama S."/>
            <person name="Nakazaki N."/>
            <person name="Shinpo S."/>
            <person name="Takeuchi C."/>
            <person name="Wada T."/>
            <person name="Watanabe A."/>
            <person name="Yamada M."/>
            <person name="Yasuda M."/>
            <person name="Tabata S."/>
        </authorList>
    </citation>
    <scope>NUCLEOTIDE SEQUENCE [LARGE SCALE GENOMIC DNA]</scope>
    <source>
        <strain>cv. Columbia</strain>
    </source>
</reference>
<reference key="3">
    <citation type="journal article" date="2017" name="Plant J.">
        <title>Araport11: a complete reannotation of the Arabidopsis thaliana reference genome.</title>
        <authorList>
            <person name="Cheng C.Y."/>
            <person name="Krishnakumar V."/>
            <person name="Chan A.P."/>
            <person name="Thibaud-Nissen F."/>
            <person name="Schobel S."/>
            <person name="Town C.D."/>
        </authorList>
    </citation>
    <scope>GENOME REANNOTATION</scope>
    <source>
        <strain>cv. Columbia</strain>
    </source>
</reference>
<reference key="4">
    <citation type="submission" date="2006-03" db="EMBL/GenBank/DDBJ databases">
        <title>Arabidopsis ORF clones.</title>
        <authorList>
            <person name="Kim C.J."/>
            <person name="Chen H."/>
            <person name="Shinn P."/>
            <person name="Ecker J.R."/>
        </authorList>
    </citation>
    <scope>NUCLEOTIDE SEQUENCE [LARGE SCALE MRNA]</scope>
    <source>
        <strain>cv. Columbia</strain>
    </source>
</reference>
<organism>
    <name type="scientific">Arabidopsis thaliana</name>
    <name type="common">Mouse-ear cress</name>
    <dbReference type="NCBI Taxonomy" id="3702"/>
    <lineage>
        <taxon>Eukaryota</taxon>
        <taxon>Viridiplantae</taxon>
        <taxon>Streptophyta</taxon>
        <taxon>Embryophyta</taxon>
        <taxon>Tracheophyta</taxon>
        <taxon>Spermatophyta</taxon>
        <taxon>Magnoliopsida</taxon>
        <taxon>eudicotyledons</taxon>
        <taxon>Gunneridae</taxon>
        <taxon>Pentapetalae</taxon>
        <taxon>rosids</taxon>
        <taxon>malvids</taxon>
        <taxon>Brassicales</taxon>
        <taxon>Brassicaceae</taxon>
        <taxon>Camelineae</taxon>
        <taxon>Arabidopsis</taxon>
    </lineage>
</organism>
<gene>
    <name type="primary">UBC12</name>
    <name type="ordered locus">At3g08700</name>
    <name type="ORF">F17O14.17</name>
</gene>
<comment type="function">
    <text evidence="1">Accepts the ubiquitin from the E1 complex and catalyzes its covalent attachment to other proteins.</text>
</comment>
<comment type="catalytic activity">
    <reaction evidence="2 3">
        <text>S-ubiquitinyl-[E1 ubiquitin-activating enzyme]-L-cysteine + [E2 ubiquitin-conjugating enzyme]-L-cysteine = [E1 ubiquitin-activating enzyme]-L-cysteine + S-ubiquitinyl-[E2 ubiquitin-conjugating enzyme]-L-cysteine.</text>
        <dbReference type="EC" id="2.3.2.23"/>
    </reaction>
</comment>
<comment type="pathway">
    <text evidence="2">Protein modification; protein ubiquitination.</text>
</comment>
<comment type="tissue specificity">
    <text evidence="5">Ubiquitously expressed at very low levels.</text>
</comment>
<comment type="similarity">
    <text evidence="2">Belongs to the ubiquitin-conjugating enzyme family.</text>
</comment>
<accession>Q9C9Y7</accession>
<feature type="chain" id="PRO_0000345181" description="Probable ubiquitin-conjugating enzyme E2 12">
    <location>
        <begin position="1"/>
        <end position="149"/>
    </location>
</feature>
<feature type="domain" description="UBC core" evidence="2">
    <location>
        <begin position="1"/>
        <end position="148"/>
    </location>
</feature>
<feature type="region of interest" description="Disordered" evidence="4">
    <location>
        <begin position="1"/>
        <end position="22"/>
    </location>
</feature>
<feature type="compositionally biased region" description="Basic and acidic residues" evidence="4">
    <location>
        <begin position="1"/>
        <end position="15"/>
    </location>
</feature>
<feature type="active site" description="Glycyl thioester intermediate" evidence="2 3">
    <location>
        <position position="86"/>
    </location>
</feature>
<name>UBC12_ARATH</name>